<protein>
    <recommendedName>
        <fullName>Olfactory receptor 2T34</fullName>
    </recommendedName>
    <alternativeName>
        <fullName>Olfactory receptor OR1-63</fullName>
    </alternativeName>
</protein>
<accession>Q8NGX1</accession>
<accession>B2RNJ8</accession>
<accession>Q6IEY5</accession>
<accession>Q96R31</accession>
<keyword id="KW-1003">Cell membrane</keyword>
<keyword id="KW-1015">Disulfide bond</keyword>
<keyword id="KW-0297">G-protein coupled receptor</keyword>
<keyword id="KW-0325">Glycoprotein</keyword>
<keyword id="KW-0472">Membrane</keyword>
<keyword id="KW-0552">Olfaction</keyword>
<keyword id="KW-0675">Receptor</keyword>
<keyword id="KW-1185">Reference proteome</keyword>
<keyword id="KW-0716">Sensory transduction</keyword>
<keyword id="KW-0807">Transducer</keyword>
<keyword id="KW-0812">Transmembrane</keyword>
<keyword id="KW-1133">Transmembrane helix</keyword>
<comment type="function">
    <text evidence="5">Odorant receptor.</text>
</comment>
<comment type="subcellular location">
    <subcellularLocation>
        <location>Cell membrane</location>
        <topology>Multi-pass membrane protein</topology>
    </subcellularLocation>
</comment>
<comment type="similarity">
    <text evidence="2">Belongs to the G-protein coupled receptor 1 family.</text>
</comment>
<comment type="sequence caution" evidence="5">
    <conflict type="erroneous initiation">
        <sequence resource="EMBL-CDS" id="DAA04875"/>
    </conflict>
</comment>
<comment type="online information" name="Human Olfactory Receptor Data Exploratorium (HORDE)">
    <link uri="http://genome.weizmann.ac.il/horde/card/index/symbol:OR2T34"/>
</comment>
<dbReference type="EMBL" id="AB065645">
    <property type="protein sequence ID" value="BAC05871.1"/>
    <property type="molecule type" value="Genomic_DNA"/>
</dbReference>
<dbReference type="EMBL" id="AC098483">
    <property type="status" value="NOT_ANNOTATED_CDS"/>
    <property type="molecule type" value="Genomic_DNA"/>
</dbReference>
<dbReference type="EMBL" id="CH471257">
    <property type="protein sequence ID" value="EAW57527.1"/>
    <property type="molecule type" value="Genomic_DNA"/>
</dbReference>
<dbReference type="EMBL" id="CH471148">
    <property type="protein sequence ID" value="EAW77228.1"/>
    <property type="molecule type" value="Genomic_DNA"/>
</dbReference>
<dbReference type="EMBL" id="BC136926">
    <property type="protein sequence ID" value="AAI36927.1"/>
    <property type="molecule type" value="mRNA"/>
</dbReference>
<dbReference type="EMBL" id="AF399612">
    <property type="protein sequence ID" value="AAK95097.1"/>
    <property type="molecule type" value="Genomic_DNA"/>
</dbReference>
<dbReference type="EMBL" id="BK004477">
    <property type="protein sequence ID" value="DAA04875.1"/>
    <property type="status" value="ALT_INIT"/>
    <property type="molecule type" value="Genomic_DNA"/>
</dbReference>
<dbReference type="CCDS" id="CCDS31120.1"/>
<dbReference type="RefSeq" id="NP_001001821.1">
    <property type="nucleotide sequence ID" value="NM_001001821.1"/>
</dbReference>
<dbReference type="SMR" id="Q8NGX1"/>
<dbReference type="FunCoup" id="Q8NGX1">
    <property type="interactions" value="462"/>
</dbReference>
<dbReference type="STRING" id="9606.ENSP00000330904"/>
<dbReference type="GlyCosmos" id="Q8NGX1">
    <property type="glycosylation" value="2 sites, No reported glycans"/>
</dbReference>
<dbReference type="GlyGen" id="Q8NGX1">
    <property type="glycosylation" value="2 sites"/>
</dbReference>
<dbReference type="BioMuta" id="OR2T34"/>
<dbReference type="DMDM" id="51339202"/>
<dbReference type="MassIVE" id="Q8NGX1"/>
<dbReference type="PaxDb" id="9606-ENSP00000330904"/>
<dbReference type="PeptideAtlas" id="Q8NGX1"/>
<dbReference type="DNASU" id="127068"/>
<dbReference type="Ensembl" id="ENST00000328782.3">
    <property type="protein sequence ID" value="ENSP00000330904.2"/>
    <property type="gene ID" value="ENSG00000183310.3"/>
</dbReference>
<dbReference type="GeneID" id="127068"/>
<dbReference type="KEGG" id="hsa:127068"/>
<dbReference type="MANE-Select" id="ENST00000328782.3">
    <property type="protein sequence ID" value="ENSP00000330904.2"/>
    <property type="RefSeq nucleotide sequence ID" value="NM_001001821.1"/>
    <property type="RefSeq protein sequence ID" value="NP_001001821.1"/>
</dbReference>
<dbReference type="UCSC" id="uc001iep.1">
    <property type="organism name" value="human"/>
</dbReference>
<dbReference type="AGR" id="HGNC:31256"/>
<dbReference type="CTD" id="127068"/>
<dbReference type="DisGeNET" id="127068"/>
<dbReference type="GeneCards" id="OR2T34"/>
<dbReference type="HGNC" id="HGNC:31256">
    <property type="gene designation" value="OR2T34"/>
</dbReference>
<dbReference type="HPA" id="ENSG00000183310">
    <property type="expression patterns" value="Not detected"/>
</dbReference>
<dbReference type="neXtProt" id="NX_Q8NGX1"/>
<dbReference type="PharmGKB" id="PA134944535"/>
<dbReference type="VEuPathDB" id="HostDB:ENSG00000183310"/>
<dbReference type="eggNOG" id="ENOG502T92R">
    <property type="taxonomic scope" value="Eukaryota"/>
</dbReference>
<dbReference type="GeneTree" id="ENSGT01130000278260"/>
<dbReference type="HOGENOM" id="CLU_012526_1_2_1"/>
<dbReference type="InParanoid" id="Q8NGX1"/>
<dbReference type="OMA" id="CYDISLY"/>
<dbReference type="OrthoDB" id="9626080at2759"/>
<dbReference type="PAN-GO" id="Q8NGX1">
    <property type="GO annotations" value="0 GO annotations based on evolutionary models"/>
</dbReference>
<dbReference type="PhylomeDB" id="Q8NGX1"/>
<dbReference type="TreeFam" id="TF337295"/>
<dbReference type="PathwayCommons" id="Q8NGX1"/>
<dbReference type="Reactome" id="R-HSA-9752946">
    <property type="pathway name" value="Expression and translocation of olfactory receptors"/>
</dbReference>
<dbReference type="BioGRID-ORCS" id="127068">
    <property type="hits" value="9 hits in 644 CRISPR screens"/>
</dbReference>
<dbReference type="GeneWiki" id="OR2T34"/>
<dbReference type="GenomeRNAi" id="127068"/>
<dbReference type="Pharos" id="Q8NGX1">
    <property type="development level" value="Tdark"/>
</dbReference>
<dbReference type="PRO" id="PR:Q8NGX1"/>
<dbReference type="Proteomes" id="UP000005640">
    <property type="component" value="Chromosome 1"/>
</dbReference>
<dbReference type="RNAct" id="Q8NGX1">
    <property type="molecule type" value="protein"/>
</dbReference>
<dbReference type="Bgee" id="ENSG00000183310">
    <property type="expression patterns" value="Expressed in adult mammalian kidney and 1 other cell type or tissue"/>
</dbReference>
<dbReference type="GO" id="GO:0005886">
    <property type="term" value="C:plasma membrane"/>
    <property type="evidence" value="ECO:0000318"/>
    <property type="project" value="GO_Central"/>
</dbReference>
<dbReference type="GO" id="GO:0004930">
    <property type="term" value="F:G protein-coupled receptor activity"/>
    <property type="evidence" value="ECO:0007669"/>
    <property type="project" value="UniProtKB-KW"/>
</dbReference>
<dbReference type="GO" id="GO:0004984">
    <property type="term" value="F:olfactory receptor activity"/>
    <property type="evidence" value="ECO:0000318"/>
    <property type="project" value="GO_Central"/>
</dbReference>
<dbReference type="GO" id="GO:0050911">
    <property type="term" value="P:detection of chemical stimulus involved in sensory perception of smell"/>
    <property type="evidence" value="ECO:0000318"/>
    <property type="project" value="GO_Central"/>
</dbReference>
<dbReference type="CDD" id="cd15421">
    <property type="entry name" value="7tmA_OR2T-like"/>
    <property type="match status" value="1"/>
</dbReference>
<dbReference type="FunFam" id="1.10.1220.70:FF:000001">
    <property type="entry name" value="Olfactory receptor"/>
    <property type="match status" value="1"/>
</dbReference>
<dbReference type="FunFam" id="1.20.1070.10:FF:000008">
    <property type="entry name" value="Olfactory receptor"/>
    <property type="match status" value="1"/>
</dbReference>
<dbReference type="Gene3D" id="1.20.1070.10">
    <property type="entry name" value="Rhodopsin 7-helix transmembrane proteins"/>
    <property type="match status" value="1"/>
</dbReference>
<dbReference type="InterPro" id="IPR000276">
    <property type="entry name" value="GPCR_Rhodpsn"/>
</dbReference>
<dbReference type="InterPro" id="IPR017452">
    <property type="entry name" value="GPCR_Rhodpsn_7TM"/>
</dbReference>
<dbReference type="InterPro" id="IPR000725">
    <property type="entry name" value="Olfact_rcpt"/>
</dbReference>
<dbReference type="PANTHER" id="PTHR26453">
    <property type="entry name" value="OLFACTORY RECEPTOR"/>
    <property type="match status" value="1"/>
</dbReference>
<dbReference type="Pfam" id="PF13853">
    <property type="entry name" value="7tm_4"/>
    <property type="match status" value="1"/>
</dbReference>
<dbReference type="PRINTS" id="PR00237">
    <property type="entry name" value="GPCRRHODOPSN"/>
</dbReference>
<dbReference type="PRINTS" id="PR00245">
    <property type="entry name" value="OLFACTORYR"/>
</dbReference>
<dbReference type="SMART" id="SM01381">
    <property type="entry name" value="7TM_GPCR_Srsx"/>
    <property type="match status" value="1"/>
</dbReference>
<dbReference type="SUPFAM" id="SSF81321">
    <property type="entry name" value="Family A G protein-coupled receptor-like"/>
    <property type="match status" value="1"/>
</dbReference>
<dbReference type="PROSITE" id="PS00237">
    <property type="entry name" value="G_PROTEIN_RECEP_F1_1"/>
    <property type="match status" value="1"/>
</dbReference>
<dbReference type="PROSITE" id="PS50262">
    <property type="entry name" value="G_PROTEIN_RECEP_F1_2"/>
    <property type="match status" value="1"/>
</dbReference>
<reference key="1">
    <citation type="submission" date="2001-07" db="EMBL/GenBank/DDBJ databases">
        <title>Genome-wide discovery and analysis of human seven transmembrane helix receptor genes.</title>
        <authorList>
            <person name="Suwa M."/>
            <person name="Sato T."/>
            <person name="Okouchi I."/>
            <person name="Arita M."/>
            <person name="Futami K."/>
            <person name="Matsumoto S."/>
            <person name="Tsutsumi S."/>
            <person name="Aburatani H."/>
            <person name="Asai K."/>
            <person name="Akiyama Y."/>
        </authorList>
    </citation>
    <scope>NUCLEOTIDE SEQUENCE [GENOMIC DNA]</scope>
</reference>
<reference key="2">
    <citation type="journal article" date="2006" name="Nature">
        <title>The DNA sequence and biological annotation of human chromosome 1.</title>
        <authorList>
            <person name="Gregory S.G."/>
            <person name="Barlow K.F."/>
            <person name="McLay K.E."/>
            <person name="Kaul R."/>
            <person name="Swarbreck D."/>
            <person name="Dunham A."/>
            <person name="Scott C.E."/>
            <person name="Howe K.L."/>
            <person name="Woodfine K."/>
            <person name="Spencer C.C.A."/>
            <person name="Jones M.C."/>
            <person name="Gillson C."/>
            <person name="Searle S."/>
            <person name="Zhou Y."/>
            <person name="Kokocinski F."/>
            <person name="McDonald L."/>
            <person name="Evans R."/>
            <person name="Phillips K."/>
            <person name="Atkinson A."/>
            <person name="Cooper R."/>
            <person name="Jones C."/>
            <person name="Hall R.E."/>
            <person name="Andrews T.D."/>
            <person name="Lloyd C."/>
            <person name="Ainscough R."/>
            <person name="Almeida J.P."/>
            <person name="Ambrose K.D."/>
            <person name="Anderson F."/>
            <person name="Andrew R.W."/>
            <person name="Ashwell R.I.S."/>
            <person name="Aubin K."/>
            <person name="Babbage A.K."/>
            <person name="Bagguley C.L."/>
            <person name="Bailey J."/>
            <person name="Beasley H."/>
            <person name="Bethel G."/>
            <person name="Bird C.P."/>
            <person name="Bray-Allen S."/>
            <person name="Brown J.Y."/>
            <person name="Brown A.J."/>
            <person name="Buckley D."/>
            <person name="Burton J."/>
            <person name="Bye J."/>
            <person name="Carder C."/>
            <person name="Chapman J.C."/>
            <person name="Clark S.Y."/>
            <person name="Clarke G."/>
            <person name="Clee C."/>
            <person name="Cobley V."/>
            <person name="Collier R.E."/>
            <person name="Corby N."/>
            <person name="Coville G.J."/>
            <person name="Davies J."/>
            <person name="Deadman R."/>
            <person name="Dunn M."/>
            <person name="Earthrowl M."/>
            <person name="Ellington A.G."/>
            <person name="Errington H."/>
            <person name="Frankish A."/>
            <person name="Frankland J."/>
            <person name="French L."/>
            <person name="Garner P."/>
            <person name="Garnett J."/>
            <person name="Gay L."/>
            <person name="Ghori M.R.J."/>
            <person name="Gibson R."/>
            <person name="Gilby L.M."/>
            <person name="Gillett W."/>
            <person name="Glithero R.J."/>
            <person name="Grafham D.V."/>
            <person name="Griffiths C."/>
            <person name="Griffiths-Jones S."/>
            <person name="Grocock R."/>
            <person name="Hammond S."/>
            <person name="Harrison E.S.I."/>
            <person name="Hart E."/>
            <person name="Haugen E."/>
            <person name="Heath P.D."/>
            <person name="Holmes S."/>
            <person name="Holt K."/>
            <person name="Howden P.J."/>
            <person name="Hunt A.R."/>
            <person name="Hunt S.E."/>
            <person name="Hunter G."/>
            <person name="Isherwood J."/>
            <person name="James R."/>
            <person name="Johnson C."/>
            <person name="Johnson D."/>
            <person name="Joy A."/>
            <person name="Kay M."/>
            <person name="Kershaw J.K."/>
            <person name="Kibukawa M."/>
            <person name="Kimberley A.M."/>
            <person name="King A."/>
            <person name="Knights A.J."/>
            <person name="Lad H."/>
            <person name="Laird G."/>
            <person name="Lawlor S."/>
            <person name="Leongamornlert D.A."/>
            <person name="Lloyd D.M."/>
            <person name="Loveland J."/>
            <person name="Lovell J."/>
            <person name="Lush M.J."/>
            <person name="Lyne R."/>
            <person name="Martin S."/>
            <person name="Mashreghi-Mohammadi M."/>
            <person name="Matthews L."/>
            <person name="Matthews N.S.W."/>
            <person name="McLaren S."/>
            <person name="Milne S."/>
            <person name="Mistry S."/>
            <person name="Moore M.J.F."/>
            <person name="Nickerson T."/>
            <person name="O'Dell C.N."/>
            <person name="Oliver K."/>
            <person name="Palmeiri A."/>
            <person name="Palmer S.A."/>
            <person name="Parker A."/>
            <person name="Patel D."/>
            <person name="Pearce A.V."/>
            <person name="Peck A.I."/>
            <person name="Pelan S."/>
            <person name="Phelps K."/>
            <person name="Phillimore B.J."/>
            <person name="Plumb R."/>
            <person name="Rajan J."/>
            <person name="Raymond C."/>
            <person name="Rouse G."/>
            <person name="Saenphimmachak C."/>
            <person name="Sehra H.K."/>
            <person name="Sheridan E."/>
            <person name="Shownkeen R."/>
            <person name="Sims S."/>
            <person name="Skuce C.D."/>
            <person name="Smith M."/>
            <person name="Steward C."/>
            <person name="Subramanian S."/>
            <person name="Sycamore N."/>
            <person name="Tracey A."/>
            <person name="Tromans A."/>
            <person name="Van Helmond Z."/>
            <person name="Wall M."/>
            <person name="Wallis J.M."/>
            <person name="White S."/>
            <person name="Whitehead S.L."/>
            <person name="Wilkinson J.E."/>
            <person name="Willey D.L."/>
            <person name="Williams H."/>
            <person name="Wilming L."/>
            <person name="Wray P.W."/>
            <person name="Wu Z."/>
            <person name="Coulson A."/>
            <person name="Vaudin M."/>
            <person name="Sulston J.E."/>
            <person name="Durbin R.M."/>
            <person name="Hubbard T."/>
            <person name="Wooster R."/>
            <person name="Dunham I."/>
            <person name="Carter N.P."/>
            <person name="McVean G."/>
            <person name="Ross M.T."/>
            <person name="Harrow J."/>
            <person name="Olson M.V."/>
            <person name="Beck S."/>
            <person name="Rogers J."/>
            <person name="Bentley D.R."/>
        </authorList>
    </citation>
    <scope>NUCLEOTIDE SEQUENCE [LARGE SCALE GENOMIC DNA]</scope>
</reference>
<reference key="3">
    <citation type="submission" date="2005-07" db="EMBL/GenBank/DDBJ databases">
        <authorList>
            <person name="Mural R.J."/>
            <person name="Istrail S."/>
            <person name="Sutton G."/>
            <person name="Florea L."/>
            <person name="Halpern A.L."/>
            <person name="Mobarry C.M."/>
            <person name="Lippert R."/>
            <person name="Walenz B."/>
            <person name="Shatkay H."/>
            <person name="Dew I."/>
            <person name="Miller J.R."/>
            <person name="Flanigan M.J."/>
            <person name="Edwards N.J."/>
            <person name="Bolanos R."/>
            <person name="Fasulo D."/>
            <person name="Halldorsson B.V."/>
            <person name="Hannenhalli S."/>
            <person name="Turner R."/>
            <person name="Yooseph S."/>
            <person name="Lu F."/>
            <person name="Nusskern D.R."/>
            <person name="Shue B.C."/>
            <person name="Zheng X.H."/>
            <person name="Zhong F."/>
            <person name="Delcher A.L."/>
            <person name="Huson D.H."/>
            <person name="Kravitz S.A."/>
            <person name="Mouchard L."/>
            <person name="Reinert K."/>
            <person name="Remington K.A."/>
            <person name="Clark A.G."/>
            <person name="Waterman M.S."/>
            <person name="Eichler E.E."/>
            <person name="Adams M.D."/>
            <person name="Hunkapiller M.W."/>
            <person name="Myers E.W."/>
            <person name="Venter J.C."/>
        </authorList>
    </citation>
    <scope>NUCLEOTIDE SEQUENCE [LARGE SCALE GENOMIC DNA]</scope>
</reference>
<reference key="4">
    <citation type="journal article" date="2004" name="Genome Res.">
        <title>The status, quality, and expansion of the NIH full-length cDNA project: the Mammalian Gene Collection (MGC).</title>
        <authorList>
            <consortium name="The MGC Project Team"/>
        </authorList>
    </citation>
    <scope>NUCLEOTIDE SEQUENCE [LARGE SCALE MRNA]</scope>
    <scope>VARIANT PRO-267</scope>
</reference>
<reference key="5">
    <citation type="journal article" date="2002" name="Genomics">
        <title>DEFOG: a practical scheme for deciphering families of genes.</title>
        <authorList>
            <person name="Fuchs T."/>
            <person name="Malecova B."/>
            <person name="Linhart C."/>
            <person name="Sharan R."/>
            <person name="Khen M."/>
            <person name="Herwig R."/>
            <person name="Shmulevich D."/>
            <person name="Elkon R."/>
            <person name="Steinfath M."/>
            <person name="O'Brien J.K."/>
            <person name="Radelof U."/>
            <person name="Lehrach H."/>
            <person name="Lancet D."/>
            <person name="Shamir R."/>
        </authorList>
    </citation>
    <scope>NUCLEOTIDE SEQUENCE [GENOMIC DNA] OF 73-289</scope>
    <scope>VARIANT PRO-267</scope>
</reference>
<reference key="6">
    <citation type="journal article" date="2004" name="Proc. Natl. Acad. Sci. U.S.A.">
        <title>The human olfactory receptor gene family.</title>
        <authorList>
            <person name="Malnic B."/>
            <person name="Godfrey P.A."/>
            <person name="Buck L.B."/>
        </authorList>
    </citation>
    <scope>IDENTIFICATION</scope>
</reference>
<reference key="7">
    <citation type="journal article" date="2004" name="Proc. Natl. Acad. Sci. U.S.A.">
        <authorList>
            <person name="Malnic B."/>
            <person name="Godfrey P.A."/>
            <person name="Buck L.B."/>
        </authorList>
    </citation>
    <scope>ERRATUM OF PUBMED:14983052</scope>
</reference>
<name>O2T34_HUMAN</name>
<sequence>MCSGNQTSQNQTASTDFTLTGLFAESKHAALLYTVTFLLFLMALTGNALLILLIHSEPRLHTPMYFFISQLALMDLMYLCVTVPKMLVGQVTGDDTISPSGCGIQMFFHLTLAGAEVFLLAAMAYDRYAAVCRPLHYPLLMNQRVCQLLVSACWVLGMVDGLLLTPITMSFPFCQSRKILSFFCETPALLKLSCSDVSLYKMLTYLCCILMLLTPIMVISSSYTLILHLIHRMNSAAGRRKALATCSSHMIIVLLLFGASFYTYMLRSSYHTAEQDMMVSAFYTIFTPVLNPLIYSLRNKDVTRALRSMMQSRMNQEK</sequence>
<proteinExistence type="evidence at transcript level"/>
<organism>
    <name type="scientific">Homo sapiens</name>
    <name type="common">Human</name>
    <dbReference type="NCBI Taxonomy" id="9606"/>
    <lineage>
        <taxon>Eukaryota</taxon>
        <taxon>Metazoa</taxon>
        <taxon>Chordata</taxon>
        <taxon>Craniata</taxon>
        <taxon>Vertebrata</taxon>
        <taxon>Euteleostomi</taxon>
        <taxon>Mammalia</taxon>
        <taxon>Eutheria</taxon>
        <taxon>Euarchontoglires</taxon>
        <taxon>Primates</taxon>
        <taxon>Haplorrhini</taxon>
        <taxon>Catarrhini</taxon>
        <taxon>Hominidae</taxon>
        <taxon>Homo</taxon>
    </lineage>
</organism>
<gene>
    <name type="primary">OR2T34</name>
</gene>
<feature type="chain" id="PRO_0000150508" description="Olfactory receptor 2T34">
    <location>
        <begin position="1"/>
        <end position="318"/>
    </location>
</feature>
<feature type="topological domain" description="Extracellular" evidence="1">
    <location>
        <begin position="1"/>
        <end position="30"/>
    </location>
</feature>
<feature type="transmembrane region" description="Helical; Name=1" evidence="1">
    <location>
        <begin position="31"/>
        <end position="54"/>
    </location>
</feature>
<feature type="topological domain" description="Cytoplasmic" evidence="1">
    <location>
        <begin position="55"/>
        <end position="62"/>
    </location>
</feature>
<feature type="transmembrane region" description="Helical; Name=2" evidence="1">
    <location>
        <begin position="63"/>
        <end position="84"/>
    </location>
</feature>
<feature type="topological domain" description="Extracellular" evidence="1">
    <location>
        <begin position="85"/>
        <end position="105"/>
    </location>
</feature>
<feature type="transmembrane region" description="Helical; Name=3" evidence="1">
    <location>
        <begin position="106"/>
        <end position="125"/>
    </location>
</feature>
<feature type="topological domain" description="Cytoplasmic" evidence="1">
    <location>
        <begin position="126"/>
        <end position="144"/>
    </location>
</feature>
<feature type="transmembrane region" description="Helical; Name=4" evidence="1">
    <location>
        <begin position="145"/>
        <end position="163"/>
    </location>
</feature>
<feature type="topological domain" description="Extracellular" evidence="1">
    <location>
        <begin position="164"/>
        <end position="200"/>
    </location>
</feature>
<feature type="transmembrane region" description="Helical; Name=5" evidence="1">
    <location>
        <begin position="201"/>
        <end position="224"/>
    </location>
</feature>
<feature type="topological domain" description="Cytoplasmic" evidence="1">
    <location>
        <begin position="225"/>
        <end position="241"/>
    </location>
</feature>
<feature type="transmembrane region" description="Helical; Name=6" evidence="1">
    <location>
        <begin position="242"/>
        <end position="264"/>
    </location>
</feature>
<feature type="topological domain" description="Extracellular" evidence="1">
    <location>
        <begin position="265"/>
        <end position="277"/>
    </location>
</feature>
<feature type="transmembrane region" description="Helical; Name=7" evidence="1">
    <location>
        <begin position="278"/>
        <end position="297"/>
    </location>
</feature>
<feature type="topological domain" description="Cytoplasmic" evidence="1">
    <location>
        <begin position="298"/>
        <end position="318"/>
    </location>
</feature>
<feature type="glycosylation site" description="N-linked (GlcNAc...) asparagine" evidence="1">
    <location>
        <position position="5"/>
    </location>
</feature>
<feature type="glycosylation site" description="N-linked (GlcNAc...) asparagine" evidence="1">
    <location>
        <position position="10"/>
    </location>
</feature>
<feature type="disulfide bond" evidence="2">
    <location>
        <begin position="102"/>
        <end position="194"/>
    </location>
</feature>
<feature type="sequence variant" id="VAR_067439" description="In dbSNP:rs1770107." evidence="3 4">
    <original>R</original>
    <variation>P</variation>
    <location>
        <position position="267"/>
    </location>
</feature>
<evidence type="ECO:0000255" key="1"/>
<evidence type="ECO:0000255" key="2">
    <source>
        <dbReference type="PROSITE-ProRule" id="PRU00521"/>
    </source>
</evidence>
<evidence type="ECO:0000269" key="3">
    <source>
    </source>
</evidence>
<evidence type="ECO:0000269" key="4">
    <source>
    </source>
</evidence>
<evidence type="ECO:0000305" key="5"/>